<evidence type="ECO:0000250" key="1"/>
<evidence type="ECO:0000255" key="2"/>
<evidence type="ECO:0000255" key="3">
    <source>
        <dbReference type="HAMAP-Rule" id="MF_00633"/>
    </source>
</evidence>
<evidence type="ECO:0000269" key="4">
    <source>
    </source>
</evidence>
<evidence type="ECO:0000305" key="5"/>
<protein>
    <recommendedName>
        <fullName>Cytochrome b6</fullName>
    </recommendedName>
</protein>
<feature type="chain" id="PRO_0000061834" description="Cytochrome b6">
    <location>
        <begin position="1"/>
        <end position="222"/>
    </location>
</feature>
<feature type="transmembrane region" description="Helical" evidence="2">
    <location>
        <begin position="39"/>
        <end position="59"/>
    </location>
</feature>
<feature type="transmembrane region" description="Helical" evidence="2">
    <location>
        <begin position="97"/>
        <end position="117"/>
    </location>
</feature>
<feature type="transmembrane region" description="Helical" evidence="2">
    <location>
        <begin position="123"/>
        <end position="143"/>
    </location>
</feature>
<feature type="transmembrane region" description="Helical" evidence="2">
    <location>
        <begin position="193"/>
        <end position="213"/>
    </location>
</feature>
<feature type="binding site" description="covalent" evidence="3">
    <location>
        <position position="42"/>
    </location>
    <ligand>
        <name>heme c</name>
        <dbReference type="ChEBI" id="CHEBI:61717"/>
    </ligand>
</feature>
<feature type="binding site" description="axial binding residue" evidence="3">
    <location>
        <position position="93"/>
    </location>
    <ligand>
        <name>heme b</name>
        <dbReference type="ChEBI" id="CHEBI:60344"/>
        <label>2</label>
    </ligand>
    <ligandPart>
        <name>Fe</name>
        <dbReference type="ChEBI" id="CHEBI:18248"/>
    </ligandPart>
</feature>
<feature type="binding site" description="axial binding residue" evidence="3">
    <location>
        <position position="107"/>
    </location>
    <ligand>
        <name>heme b</name>
        <dbReference type="ChEBI" id="CHEBI:60344"/>
        <label>1</label>
    </ligand>
    <ligandPart>
        <name>Fe</name>
        <dbReference type="ChEBI" id="CHEBI:18248"/>
    </ligandPart>
</feature>
<feature type="binding site" description="axial binding residue" evidence="3">
    <location>
        <position position="194"/>
    </location>
    <ligand>
        <name>heme b</name>
        <dbReference type="ChEBI" id="CHEBI:60344"/>
        <label>2</label>
    </ligand>
    <ligandPart>
        <name>Fe</name>
        <dbReference type="ChEBI" id="CHEBI:18248"/>
    </ligandPart>
</feature>
<feature type="binding site" description="axial binding residue" evidence="3">
    <location>
        <position position="209"/>
    </location>
    <ligand>
        <name>heme b</name>
        <dbReference type="ChEBI" id="CHEBI:60344"/>
        <label>1</label>
    </ligand>
    <ligandPart>
        <name>Fe</name>
        <dbReference type="ChEBI" id="CHEBI:18248"/>
    </ligandPart>
</feature>
<feature type="mutagenesis site" description="Makes bacteria sensitive to myxothiazol." evidence="4">
    <original>D</original>
    <variation>G</variation>
    <location>
        <position position="148"/>
    </location>
</feature>
<feature type="mutagenesis site" description="Increases resistance to the quinone analog DBMIB and to stigmatellin." evidence="4">
    <original>A</original>
    <variation>G</variation>
    <location>
        <position position="154"/>
    </location>
</feature>
<feature type="mutagenesis site" description="Increases resistance to the quinone analog DBMIB." evidence="4">
    <original>S</original>
    <variation>A</variation>
    <location>
        <position position="159"/>
    </location>
</feature>
<feature type="mutagenesis site" description="No assembly of cytochrome b6f complex." evidence="4">
    <original>H</original>
    <variation>Q</variation>
    <location>
        <position position="209"/>
    </location>
</feature>
<keyword id="KW-0249">Electron transport</keyword>
<keyword id="KW-0349">Heme</keyword>
<keyword id="KW-0408">Iron</keyword>
<keyword id="KW-0472">Membrane</keyword>
<keyword id="KW-0479">Metal-binding</keyword>
<keyword id="KW-0602">Photosynthesis</keyword>
<keyword id="KW-1185">Reference proteome</keyword>
<keyword id="KW-0793">Thylakoid</keyword>
<keyword id="KW-0812">Transmembrane</keyword>
<keyword id="KW-1133">Transmembrane helix</keyword>
<keyword id="KW-0813">Transport</keyword>
<organism>
    <name type="scientific">Picosynechococcus sp. (strain ATCC 27264 / PCC 7002 / PR-6)</name>
    <name type="common">Agmenellum quadruplicatum</name>
    <dbReference type="NCBI Taxonomy" id="32049"/>
    <lineage>
        <taxon>Bacteria</taxon>
        <taxon>Bacillati</taxon>
        <taxon>Cyanobacteriota</taxon>
        <taxon>Cyanophyceae</taxon>
        <taxon>Oscillatoriophycideae</taxon>
        <taxon>Chroococcales</taxon>
        <taxon>Geminocystaceae</taxon>
        <taxon>Picosynechococcus</taxon>
    </lineage>
</organism>
<reference key="1">
    <citation type="journal article" date="1992" name="Plant Mol. Biol.">
        <title>Cloning and sequencing of the petBD operon from the cyanobacterium Synechococcus sp. PCC 7002.</title>
        <authorList>
            <person name="Brand S.N."/>
            <person name="Tan X."/>
            <person name="Widger W.R."/>
        </authorList>
    </citation>
    <scope>NUCLEOTIDE SEQUENCE [GENOMIC DNA]</scope>
</reference>
<reference key="2">
    <citation type="submission" date="2008-02" db="EMBL/GenBank/DDBJ databases">
        <title>Complete sequence of Synechococcus sp. PCC 7002.</title>
        <authorList>
            <person name="Li T."/>
            <person name="Zhao J."/>
            <person name="Zhao C."/>
            <person name="Liu Z."/>
            <person name="Zhao F."/>
            <person name="Marquardt J."/>
            <person name="Nomura C.T."/>
            <person name="Persson S."/>
            <person name="Detter J.C."/>
            <person name="Richardson P.M."/>
            <person name="Lanz C."/>
            <person name="Schuster S.C."/>
            <person name="Wang J."/>
            <person name="Li S."/>
            <person name="Huang X."/>
            <person name="Cai T."/>
            <person name="Yu Z."/>
            <person name="Luo J."/>
            <person name="Zhao J."/>
            <person name="Bryant D.A."/>
        </authorList>
    </citation>
    <scope>NUCLEOTIDE SEQUENCE [LARGE SCALE GENOMIC DNA]</scope>
    <source>
        <strain>ATCC 27264 / PCC 7002 / PR-6</strain>
    </source>
</reference>
<reference key="3">
    <citation type="journal article" date="2001" name="Biochim. Biophys. Acta">
        <title>Modification of inhibitor binding sites in the cytochrome bf complex by directed mutagenesis of cytochrome b(6) in Synechococcus sp. PCC 7002.</title>
        <authorList>
            <person name="Lee T.-X."/>
            <person name="Metzger S.U."/>
            <person name="Cho Y.S."/>
            <person name="Whitmarsh J."/>
            <person name="Kallas T."/>
        </authorList>
    </citation>
    <scope>MUTAGENESIS OF ASP-148; ALA-154; SER-159 AND HIS-209</scope>
</reference>
<comment type="function">
    <text evidence="1">Component of the cytochrome b6-f complex, which mediates electron transfer between photosystem II (PSII) and photosystem I (PSI), cyclic electron flow around PSI, and state transitions.</text>
</comment>
<comment type="cofactor">
    <cofactor evidence="3">
        <name>heme b</name>
        <dbReference type="ChEBI" id="CHEBI:60344"/>
    </cofactor>
    <text evidence="3">Binds 2 heme b groups non-covalently with two histidine residues as axial ligands.</text>
</comment>
<comment type="cofactor">
    <cofactor evidence="3">
        <name>heme c</name>
        <dbReference type="ChEBI" id="CHEBI:61717"/>
    </cofactor>
    <text evidence="3">Binds one heme group covalently by a single cysteine link with no axial amino acid ligand. This heme was named heme ci.</text>
</comment>
<comment type="subunit">
    <text evidence="1">The 4 large subunits of the cytochrome b6-f complex are cytochrome b6, subunit IV (17 kDa polypeptide, PetD), cytochrome f and the Rieske protein, while the 4 small subunits are PetG, PetL, PetM and PetN. The complex functions as a dimer (By similarity).</text>
</comment>
<comment type="subcellular location">
    <subcellularLocation>
        <location>Cellular thylakoid membrane</location>
        <topology>Multi-pass membrane protein</topology>
    </subcellularLocation>
</comment>
<comment type="miscellaneous">
    <text evidence="1">Heme 1 (or BH or b566) is high-potential and absorbs at about 566 nm, and heme 2 (or BL or b562) is low-potential and absorbs at about 562 nm.</text>
</comment>
<comment type="similarity">
    <text evidence="5">Belongs to the cytochrome b family. PetB subfamily.</text>
</comment>
<sequence>MFTKEVTDSKLYKWFNERLEIQAISDDISSKYVPPHVNIFYCLGGITLTCFIIQFATGFAMTFYYKPTVAEAFTSVQYIMNEVNFGWLIRSIHRWSASMMVLMMILHIFRVYLTGGFKRPRELTWITGVIMATITVSFGVTGYSLPWDQVGYWAVKIVSGVPAAIPVVGDQMVELLRGGASVGQATLTRFYSLHTFVLPWLIAVFMLAHFLMIRKQGISGPL</sequence>
<accession>P28056</accession>
<accession>B1XIH5</accession>
<dbReference type="EMBL" id="X63049">
    <property type="protein sequence ID" value="CAA44774.1"/>
    <property type="molecule type" value="Genomic_DNA"/>
</dbReference>
<dbReference type="EMBL" id="CP000951">
    <property type="protein sequence ID" value="ACA98846.1"/>
    <property type="molecule type" value="Genomic_DNA"/>
</dbReference>
<dbReference type="RefSeq" id="WP_012306470.1">
    <property type="nucleotide sequence ID" value="NZ_JAHHPU010000001.1"/>
</dbReference>
<dbReference type="SMR" id="P28056"/>
<dbReference type="STRING" id="32049.SYNPCC7002_A0842"/>
<dbReference type="KEGG" id="syp:SYNPCC7002_A0842"/>
<dbReference type="eggNOG" id="COG1290">
    <property type="taxonomic scope" value="Bacteria"/>
</dbReference>
<dbReference type="HOGENOM" id="CLU_031114_0_2_3"/>
<dbReference type="Proteomes" id="UP000001688">
    <property type="component" value="Chromosome"/>
</dbReference>
<dbReference type="GO" id="GO:0031676">
    <property type="term" value="C:plasma membrane-derived thylakoid membrane"/>
    <property type="evidence" value="ECO:0007669"/>
    <property type="project" value="UniProtKB-SubCell"/>
</dbReference>
<dbReference type="GO" id="GO:0045158">
    <property type="term" value="F:electron transporter, transferring electrons within cytochrome b6/f complex of photosystem II activity"/>
    <property type="evidence" value="ECO:0007669"/>
    <property type="project" value="UniProtKB-UniRule"/>
</dbReference>
<dbReference type="GO" id="GO:0046872">
    <property type="term" value="F:metal ion binding"/>
    <property type="evidence" value="ECO:0007669"/>
    <property type="project" value="UniProtKB-KW"/>
</dbReference>
<dbReference type="GO" id="GO:0016491">
    <property type="term" value="F:oxidoreductase activity"/>
    <property type="evidence" value="ECO:0007669"/>
    <property type="project" value="InterPro"/>
</dbReference>
<dbReference type="GO" id="GO:0015979">
    <property type="term" value="P:photosynthesis"/>
    <property type="evidence" value="ECO:0007669"/>
    <property type="project" value="UniProtKB-UniRule"/>
</dbReference>
<dbReference type="GO" id="GO:0022904">
    <property type="term" value="P:respiratory electron transport chain"/>
    <property type="evidence" value="ECO:0007669"/>
    <property type="project" value="InterPro"/>
</dbReference>
<dbReference type="CDD" id="cd00284">
    <property type="entry name" value="Cytochrome_b_N"/>
    <property type="match status" value="1"/>
</dbReference>
<dbReference type="FunFam" id="1.20.810.10:FF:000001">
    <property type="entry name" value="Cytochrome b6"/>
    <property type="match status" value="1"/>
</dbReference>
<dbReference type="Gene3D" id="1.20.810.10">
    <property type="entry name" value="Cytochrome Bc1 Complex, Chain C"/>
    <property type="match status" value="1"/>
</dbReference>
<dbReference type="HAMAP" id="MF_00633">
    <property type="entry name" value="Cytb6_f_cytb6"/>
    <property type="match status" value="1"/>
</dbReference>
<dbReference type="InterPro" id="IPR005797">
    <property type="entry name" value="Cyt_b/b6_N"/>
</dbReference>
<dbReference type="InterPro" id="IPR023530">
    <property type="entry name" value="Cyt_B6_PetB"/>
</dbReference>
<dbReference type="InterPro" id="IPR027387">
    <property type="entry name" value="Cytb/b6-like_sf"/>
</dbReference>
<dbReference type="InterPro" id="IPR048259">
    <property type="entry name" value="Cytochrome_b_N_euk/bac"/>
</dbReference>
<dbReference type="InterPro" id="IPR016174">
    <property type="entry name" value="Di-haem_cyt_TM"/>
</dbReference>
<dbReference type="NCBIfam" id="NF002990">
    <property type="entry name" value="PRK03735.1"/>
    <property type="match status" value="1"/>
</dbReference>
<dbReference type="PANTHER" id="PTHR19271">
    <property type="entry name" value="CYTOCHROME B"/>
    <property type="match status" value="1"/>
</dbReference>
<dbReference type="PANTHER" id="PTHR19271:SF16">
    <property type="entry name" value="CYTOCHROME B"/>
    <property type="match status" value="1"/>
</dbReference>
<dbReference type="Pfam" id="PF00033">
    <property type="entry name" value="Cytochrome_B"/>
    <property type="match status" value="1"/>
</dbReference>
<dbReference type="PIRSF" id="PIRSF000032">
    <property type="entry name" value="Cytochrome_b6"/>
    <property type="match status" value="1"/>
</dbReference>
<dbReference type="SUPFAM" id="SSF81342">
    <property type="entry name" value="Transmembrane di-heme cytochromes"/>
    <property type="match status" value="1"/>
</dbReference>
<dbReference type="PROSITE" id="PS51002">
    <property type="entry name" value="CYTB_NTER"/>
    <property type="match status" value="1"/>
</dbReference>
<name>CYB6_PICP2</name>
<proteinExistence type="evidence at protein level"/>
<gene>
    <name type="primary">petB</name>
    <name type="ordered locus">SYNPCC7002_A0842</name>
</gene>